<reference key="1">
    <citation type="journal article" date="2005" name="Plant Mol. Biol.">
        <title>Complete chloroplast genome sequence of Glycine max and comparative analyses with other legume genomes.</title>
        <authorList>
            <person name="Saski C."/>
            <person name="Lee S.-B."/>
            <person name="Daniell H."/>
            <person name="Wood T.C."/>
            <person name="Tomkins J."/>
            <person name="Kim H.-G."/>
            <person name="Jansen R.K."/>
        </authorList>
    </citation>
    <scope>NUCLEOTIDE SEQUENCE [LARGE SCALE GENOMIC DNA]</scope>
    <source>
        <strain>cv. PI 437654</strain>
    </source>
</reference>
<dbReference type="EMBL" id="DQ317523">
    <property type="protein sequence ID" value="ABC25142.1"/>
    <property type="molecule type" value="Genomic_DNA"/>
</dbReference>
<dbReference type="RefSeq" id="YP_538782.1">
    <property type="nucleotide sequence ID" value="NC_007942.1"/>
</dbReference>
<dbReference type="SMR" id="Q2PMR6"/>
<dbReference type="STRING" id="3847.Q2PMR6"/>
<dbReference type="EnsemblPlants" id="KRH27387">
    <property type="protein sequence ID" value="KRH27387"/>
    <property type="gene ID" value="GLYMA_12G232600"/>
</dbReference>
<dbReference type="GeneID" id="3989314"/>
<dbReference type="Gramene" id="KRH27387">
    <property type="protein sequence ID" value="KRH27387"/>
    <property type="gene ID" value="GLYMA_12G232600"/>
</dbReference>
<dbReference type="KEGG" id="gmx:3989314"/>
<dbReference type="InParanoid" id="Q2PMR6"/>
<dbReference type="OrthoDB" id="1373986at2759"/>
<dbReference type="Proteomes" id="UP000008827">
    <property type="component" value="Chloroplast"/>
</dbReference>
<dbReference type="GO" id="GO:0009535">
    <property type="term" value="C:chloroplast thylakoid membrane"/>
    <property type="evidence" value="ECO:0007669"/>
    <property type="project" value="UniProtKB-SubCell"/>
</dbReference>
<dbReference type="GO" id="GO:0009512">
    <property type="term" value="C:cytochrome b6f complex"/>
    <property type="evidence" value="ECO:0007669"/>
    <property type="project" value="InterPro"/>
</dbReference>
<dbReference type="GO" id="GO:0045158">
    <property type="term" value="F:electron transporter, transferring electrons within cytochrome b6/f complex of photosystem II activity"/>
    <property type="evidence" value="ECO:0007669"/>
    <property type="project" value="UniProtKB-UniRule"/>
</dbReference>
<dbReference type="GO" id="GO:0015979">
    <property type="term" value="P:photosynthesis"/>
    <property type="evidence" value="ECO:0007669"/>
    <property type="project" value="UniProtKB-KW"/>
</dbReference>
<dbReference type="HAMAP" id="MF_00433">
    <property type="entry name" value="Cytb6_f_PetL"/>
    <property type="match status" value="1"/>
</dbReference>
<dbReference type="InterPro" id="IPR007802">
    <property type="entry name" value="Cyt_b6/f_cplx_su6"/>
</dbReference>
<dbReference type="PANTHER" id="PTHR37266">
    <property type="entry name" value="CYTOCHROME B6-F COMPLEX SUBUNIT 6"/>
    <property type="match status" value="1"/>
</dbReference>
<dbReference type="PANTHER" id="PTHR37266:SF1">
    <property type="entry name" value="CYTOCHROME B6-F COMPLEX SUBUNIT 6"/>
    <property type="match status" value="1"/>
</dbReference>
<dbReference type="Pfam" id="PF05115">
    <property type="entry name" value="PetL"/>
    <property type="match status" value="1"/>
</dbReference>
<dbReference type="SUPFAM" id="SSF103436">
    <property type="entry name" value="PetL subunit of the cytochrome b6f complex"/>
    <property type="match status" value="1"/>
</dbReference>
<organism>
    <name type="scientific">Glycine max</name>
    <name type="common">Soybean</name>
    <name type="synonym">Glycine hispida</name>
    <dbReference type="NCBI Taxonomy" id="3847"/>
    <lineage>
        <taxon>Eukaryota</taxon>
        <taxon>Viridiplantae</taxon>
        <taxon>Streptophyta</taxon>
        <taxon>Embryophyta</taxon>
        <taxon>Tracheophyta</taxon>
        <taxon>Spermatophyta</taxon>
        <taxon>Magnoliopsida</taxon>
        <taxon>eudicotyledons</taxon>
        <taxon>Gunneridae</taxon>
        <taxon>Pentapetalae</taxon>
        <taxon>rosids</taxon>
        <taxon>fabids</taxon>
        <taxon>Fabales</taxon>
        <taxon>Fabaceae</taxon>
        <taxon>Papilionoideae</taxon>
        <taxon>50 kb inversion clade</taxon>
        <taxon>NPAAA clade</taxon>
        <taxon>indigoferoid/millettioid clade</taxon>
        <taxon>Phaseoleae</taxon>
        <taxon>Glycine</taxon>
        <taxon>Glycine subgen. Soja</taxon>
    </lineage>
</organism>
<proteinExistence type="inferred from homology"/>
<sequence length="31" mass="3473">MLTITSYFGFLLVVLIITSSLFIGLSKIRLI</sequence>
<protein>
    <recommendedName>
        <fullName evidence="1">Cytochrome b6-f complex subunit 6</fullName>
    </recommendedName>
    <alternativeName>
        <fullName evidence="1">Cytochrome b6-f complex subunit PetL</fullName>
    </alternativeName>
    <alternativeName>
        <fullName evidence="1">Cytochrome b6-f complex subunit VI</fullName>
    </alternativeName>
</protein>
<keyword id="KW-0150">Chloroplast</keyword>
<keyword id="KW-0249">Electron transport</keyword>
<keyword id="KW-0472">Membrane</keyword>
<keyword id="KW-0602">Photosynthesis</keyword>
<keyword id="KW-0934">Plastid</keyword>
<keyword id="KW-1185">Reference proteome</keyword>
<keyword id="KW-0793">Thylakoid</keyword>
<keyword id="KW-0812">Transmembrane</keyword>
<keyword id="KW-1133">Transmembrane helix</keyword>
<keyword id="KW-0813">Transport</keyword>
<gene>
    <name evidence="1" type="primary">petL</name>
</gene>
<accession>Q2PMR6</accession>
<name>PETL_SOYBN</name>
<comment type="function">
    <text evidence="1">Component of the cytochrome b6-f complex, which mediates electron transfer between photosystem II (PSII) and photosystem I (PSI), cyclic electron flow around PSI, and state transitions. PetL is important for photoautotrophic growth as well as for electron transfer efficiency and stability of the cytochrome b6-f complex.</text>
</comment>
<comment type="subunit">
    <text evidence="1">The 4 large subunits of the cytochrome b6-f complex are cytochrome b6, subunit IV (17 kDa polypeptide, PetD), cytochrome f and the Rieske protein, while the 4 small subunits are PetG, PetL, PetM and PetN. The complex functions as a dimer.</text>
</comment>
<comment type="subcellular location">
    <subcellularLocation>
        <location evidence="1">Plastid</location>
        <location evidence="1">Chloroplast thylakoid membrane</location>
        <topology evidence="1">Single-pass membrane protein</topology>
    </subcellularLocation>
</comment>
<comment type="similarity">
    <text evidence="1">Belongs to the PetL family.</text>
</comment>
<geneLocation type="chloroplast"/>
<evidence type="ECO:0000255" key="1">
    <source>
        <dbReference type="HAMAP-Rule" id="MF_00433"/>
    </source>
</evidence>
<feature type="chain" id="PRO_0000233687" description="Cytochrome b6-f complex subunit 6">
    <location>
        <begin position="1"/>
        <end position="31"/>
    </location>
</feature>
<feature type="transmembrane region" description="Helical" evidence="1">
    <location>
        <begin position="4"/>
        <end position="24"/>
    </location>
</feature>